<evidence type="ECO:0000255" key="1">
    <source>
        <dbReference type="HAMAP-Rule" id="MF_01241"/>
    </source>
</evidence>
<name>NAGB_STAAE</name>
<protein>
    <recommendedName>
        <fullName evidence="1">Glucosamine-6-phosphate deaminase</fullName>
        <ecNumber evidence="1">3.5.99.6</ecNumber>
    </recommendedName>
    <alternativeName>
        <fullName evidence="1">GlcN6P deaminase</fullName>
        <shortName evidence="1">GNPDA</shortName>
    </alternativeName>
    <alternativeName>
        <fullName evidence="1">Glucosamine-6-phosphate isomerase</fullName>
    </alternativeName>
</protein>
<keyword id="KW-0119">Carbohydrate metabolism</keyword>
<keyword id="KW-0378">Hydrolase</keyword>
<comment type="function">
    <text evidence="1">Catalyzes the reversible isomerization-deamination of glucosamine 6-phosphate (GlcN6P) to form fructose 6-phosphate (Fru6P) and ammonium ion.</text>
</comment>
<comment type="catalytic activity">
    <reaction evidence="1">
        <text>alpha-D-glucosamine 6-phosphate + H2O = beta-D-fructose 6-phosphate + NH4(+)</text>
        <dbReference type="Rhea" id="RHEA:12172"/>
        <dbReference type="ChEBI" id="CHEBI:15377"/>
        <dbReference type="ChEBI" id="CHEBI:28938"/>
        <dbReference type="ChEBI" id="CHEBI:57634"/>
        <dbReference type="ChEBI" id="CHEBI:75989"/>
        <dbReference type="EC" id="3.5.99.6"/>
    </reaction>
</comment>
<comment type="pathway">
    <text evidence="1">Amino-sugar metabolism; N-acetylneuraminate degradation; D-fructose 6-phosphate from N-acetylneuraminate: step 5/5.</text>
</comment>
<comment type="similarity">
    <text evidence="1">Belongs to the glucosamine/galactosamine-6-phosphate isomerase family. NagB subfamily.</text>
</comment>
<feature type="chain" id="PRO_1000073173" description="Glucosamine-6-phosphate deaminase">
    <location>
        <begin position="1"/>
        <end position="252"/>
    </location>
</feature>
<feature type="active site" description="Proton acceptor; for enolization step" evidence="1">
    <location>
        <position position="67"/>
    </location>
</feature>
<feature type="active site" description="For ring-opening step" evidence="1">
    <location>
        <position position="137"/>
    </location>
</feature>
<feature type="active site" description="Proton acceptor; for ring-opening step" evidence="1">
    <location>
        <position position="139"/>
    </location>
</feature>
<feature type="active site" description="For ring-opening step" evidence="1">
    <location>
        <position position="144"/>
    </location>
</feature>
<sequence>MKVLNLGSKKQASFYVACELYKEMAFNQHCKLGLATGGTMTDLYEQLVKLLNKNQLNVDNVSTFNLDEYVGLTASHPQSYHYYMDDMLFKQYPYFNRKNIHIPNGDADDMNAEASKYNDVLEQQGQRDIQILGIGENGHIGFNEPGTPFDSVTHIVDLTESTIKANSRYFKNEDDVPKQAISMGLANILQAKRIILLAFGEKKRAAITHLLNQEISVDVPATLLHKHPNVEIYLDDEACPKNVAKIHVDEMD</sequence>
<proteinExistence type="inferred from homology"/>
<gene>
    <name evidence="1" type="primary">nagB</name>
    <name type="ordered locus">NWMN_0532</name>
</gene>
<accession>A6QEM2</accession>
<reference key="1">
    <citation type="journal article" date="2008" name="J. Bacteriol.">
        <title>Genome sequence of Staphylococcus aureus strain Newman and comparative analysis of staphylococcal genomes: polymorphism and evolution of two major pathogenicity islands.</title>
        <authorList>
            <person name="Baba T."/>
            <person name="Bae T."/>
            <person name="Schneewind O."/>
            <person name="Takeuchi F."/>
            <person name="Hiramatsu K."/>
        </authorList>
    </citation>
    <scope>NUCLEOTIDE SEQUENCE [LARGE SCALE GENOMIC DNA]</scope>
    <source>
        <strain>Newman</strain>
    </source>
</reference>
<dbReference type="EC" id="3.5.99.6" evidence="1"/>
<dbReference type="EMBL" id="AP009351">
    <property type="protein sequence ID" value="BAF66804.1"/>
    <property type="molecule type" value="Genomic_DNA"/>
</dbReference>
<dbReference type="RefSeq" id="WP_000866415.1">
    <property type="nucleotide sequence ID" value="NZ_JBBIAE010000002.1"/>
</dbReference>
<dbReference type="SMR" id="A6QEM2"/>
<dbReference type="KEGG" id="sae:NWMN_0532"/>
<dbReference type="HOGENOM" id="CLU_049611_1_1_9"/>
<dbReference type="UniPathway" id="UPA00629">
    <property type="reaction ID" value="UER00684"/>
</dbReference>
<dbReference type="Proteomes" id="UP000006386">
    <property type="component" value="Chromosome"/>
</dbReference>
<dbReference type="GO" id="GO:0005737">
    <property type="term" value="C:cytoplasm"/>
    <property type="evidence" value="ECO:0007669"/>
    <property type="project" value="TreeGrafter"/>
</dbReference>
<dbReference type="GO" id="GO:0004342">
    <property type="term" value="F:glucosamine-6-phosphate deaminase activity"/>
    <property type="evidence" value="ECO:0007669"/>
    <property type="project" value="UniProtKB-UniRule"/>
</dbReference>
<dbReference type="GO" id="GO:0042802">
    <property type="term" value="F:identical protein binding"/>
    <property type="evidence" value="ECO:0007669"/>
    <property type="project" value="TreeGrafter"/>
</dbReference>
<dbReference type="GO" id="GO:0005975">
    <property type="term" value="P:carbohydrate metabolic process"/>
    <property type="evidence" value="ECO:0007669"/>
    <property type="project" value="InterPro"/>
</dbReference>
<dbReference type="GO" id="GO:0006043">
    <property type="term" value="P:glucosamine catabolic process"/>
    <property type="evidence" value="ECO:0007669"/>
    <property type="project" value="TreeGrafter"/>
</dbReference>
<dbReference type="GO" id="GO:0006046">
    <property type="term" value="P:N-acetylglucosamine catabolic process"/>
    <property type="evidence" value="ECO:0007669"/>
    <property type="project" value="TreeGrafter"/>
</dbReference>
<dbReference type="GO" id="GO:0019262">
    <property type="term" value="P:N-acetylneuraminate catabolic process"/>
    <property type="evidence" value="ECO:0007669"/>
    <property type="project" value="UniProtKB-UniRule"/>
</dbReference>
<dbReference type="CDD" id="cd01399">
    <property type="entry name" value="GlcN6P_deaminase"/>
    <property type="match status" value="1"/>
</dbReference>
<dbReference type="FunFam" id="3.40.50.1360:FF:000003">
    <property type="entry name" value="Glucosamine-6-phosphate deaminase"/>
    <property type="match status" value="1"/>
</dbReference>
<dbReference type="Gene3D" id="3.40.50.1360">
    <property type="match status" value="1"/>
</dbReference>
<dbReference type="HAMAP" id="MF_01241">
    <property type="entry name" value="GlcN6P_deamin"/>
    <property type="match status" value="1"/>
</dbReference>
<dbReference type="InterPro" id="IPR006148">
    <property type="entry name" value="Glc/Gal-6P_isomerase"/>
</dbReference>
<dbReference type="InterPro" id="IPR004547">
    <property type="entry name" value="Glucosamine6P_isomerase"/>
</dbReference>
<dbReference type="InterPro" id="IPR018321">
    <property type="entry name" value="Glucosamine6P_isomerase_CS"/>
</dbReference>
<dbReference type="InterPro" id="IPR037171">
    <property type="entry name" value="NagB/RpiA_transferase-like"/>
</dbReference>
<dbReference type="NCBIfam" id="TIGR00502">
    <property type="entry name" value="nagB"/>
    <property type="match status" value="1"/>
</dbReference>
<dbReference type="PANTHER" id="PTHR11280">
    <property type="entry name" value="GLUCOSAMINE-6-PHOSPHATE ISOMERASE"/>
    <property type="match status" value="1"/>
</dbReference>
<dbReference type="PANTHER" id="PTHR11280:SF5">
    <property type="entry name" value="GLUCOSAMINE-6-PHOSPHATE ISOMERASE"/>
    <property type="match status" value="1"/>
</dbReference>
<dbReference type="Pfam" id="PF01182">
    <property type="entry name" value="Glucosamine_iso"/>
    <property type="match status" value="1"/>
</dbReference>
<dbReference type="SUPFAM" id="SSF100950">
    <property type="entry name" value="NagB/RpiA/CoA transferase-like"/>
    <property type="match status" value="1"/>
</dbReference>
<dbReference type="PROSITE" id="PS01161">
    <property type="entry name" value="GLC_GALNAC_ISOMERASE"/>
    <property type="match status" value="1"/>
</dbReference>
<organism>
    <name type="scientific">Staphylococcus aureus (strain Newman)</name>
    <dbReference type="NCBI Taxonomy" id="426430"/>
    <lineage>
        <taxon>Bacteria</taxon>
        <taxon>Bacillati</taxon>
        <taxon>Bacillota</taxon>
        <taxon>Bacilli</taxon>
        <taxon>Bacillales</taxon>
        <taxon>Staphylococcaceae</taxon>
        <taxon>Staphylococcus</taxon>
    </lineage>
</organism>